<organism>
    <name type="scientific">Cupriavidus pinatubonensis (strain JMP 134 / LMG 1197)</name>
    <name type="common">Cupriavidus necator (strain JMP 134)</name>
    <dbReference type="NCBI Taxonomy" id="264198"/>
    <lineage>
        <taxon>Bacteria</taxon>
        <taxon>Pseudomonadati</taxon>
        <taxon>Pseudomonadota</taxon>
        <taxon>Betaproteobacteria</taxon>
        <taxon>Burkholderiales</taxon>
        <taxon>Burkholderiaceae</taxon>
        <taxon>Cupriavidus</taxon>
    </lineage>
</organism>
<accession>Q470C3</accession>
<evidence type="ECO:0000255" key="1">
    <source>
        <dbReference type="HAMAP-Rule" id="MF_01690"/>
    </source>
</evidence>
<reference key="1">
    <citation type="journal article" date="2010" name="PLoS ONE">
        <title>The complete multipartite genome sequence of Cupriavidus necator JMP134, a versatile pollutant degrader.</title>
        <authorList>
            <person name="Lykidis A."/>
            <person name="Perez-Pantoja D."/>
            <person name="Ledger T."/>
            <person name="Mavromatis K."/>
            <person name="Anderson I.J."/>
            <person name="Ivanova N.N."/>
            <person name="Hooper S.D."/>
            <person name="Lapidus A."/>
            <person name="Lucas S."/>
            <person name="Gonzalez B."/>
            <person name="Kyrpides N.C."/>
        </authorList>
    </citation>
    <scope>NUCLEOTIDE SEQUENCE [LARGE SCALE GENOMIC DNA]</scope>
    <source>
        <strain>JMP134 / LMG 1197</strain>
    </source>
</reference>
<comment type="function">
    <text evidence="1">Catalyzes the hydrolysis of N-succinyl-L,L-diaminopimelic acid (SDAP), forming succinate and LL-2,6-diaminopimelate (DAP), an intermediate involved in the bacterial biosynthesis of lysine and meso-diaminopimelic acid, an essential component of bacterial cell walls.</text>
</comment>
<comment type="catalytic activity">
    <reaction evidence="1">
        <text>N-succinyl-(2S,6S)-2,6-diaminopimelate + H2O = (2S,6S)-2,6-diaminopimelate + succinate</text>
        <dbReference type="Rhea" id="RHEA:22608"/>
        <dbReference type="ChEBI" id="CHEBI:15377"/>
        <dbReference type="ChEBI" id="CHEBI:30031"/>
        <dbReference type="ChEBI" id="CHEBI:57609"/>
        <dbReference type="ChEBI" id="CHEBI:58087"/>
        <dbReference type="EC" id="3.5.1.18"/>
    </reaction>
</comment>
<comment type="cofactor">
    <cofactor evidence="1">
        <name>Zn(2+)</name>
        <dbReference type="ChEBI" id="CHEBI:29105"/>
    </cofactor>
    <cofactor evidence="1">
        <name>Co(2+)</name>
        <dbReference type="ChEBI" id="CHEBI:48828"/>
    </cofactor>
    <text evidence="1">Binds 2 Zn(2+) or Co(2+) ions per subunit.</text>
</comment>
<comment type="pathway">
    <text evidence="1">Amino-acid biosynthesis; L-lysine biosynthesis via DAP pathway; LL-2,6-diaminopimelate from (S)-tetrahydrodipicolinate (succinylase route): step 3/3.</text>
</comment>
<comment type="subunit">
    <text evidence="1">Homodimer.</text>
</comment>
<comment type="similarity">
    <text evidence="1">Belongs to the peptidase M20A family. DapE subfamily.</text>
</comment>
<dbReference type="EC" id="3.5.1.18" evidence="1"/>
<dbReference type="EMBL" id="CP000090">
    <property type="protein sequence ID" value="AAZ61260.1"/>
    <property type="molecule type" value="Genomic_DNA"/>
</dbReference>
<dbReference type="SMR" id="Q470C3"/>
<dbReference type="STRING" id="264198.Reut_A1895"/>
<dbReference type="KEGG" id="reu:Reut_A1895"/>
<dbReference type="eggNOG" id="COG0624">
    <property type="taxonomic scope" value="Bacteria"/>
</dbReference>
<dbReference type="HOGENOM" id="CLU_021802_4_0_4"/>
<dbReference type="OrthoDB" id="9809784at2"/>
<dbReference type="UniPathway" id="UPA00034">
    <property type="reaction ID" value="UER00021"/>
</dbReference>
<dbReference type="GO" id="GO:0008777">
    <property type="term" value="F:acetylornithine deacetylase activity"/>
    <property type="evidence" value="ECO:0007669"/>
    <property type="project" value="TreeGrafter"/>
</dbReference>
<dbReference type="GO" id="GO:0050897">
    <property type="term" value="F:cobalt ion binding"/>
    <property type="evidence" value="ECO:0007669"/>
    <property type="project" value="UniProtKB-UniRule"/>
</dbReference>
<dbReference type="GO" id="GO:0009014">
    <property type="term" value="F:succinyl-diaminopimelate desuccinylase activity"/>
    <property type="evidence" value="ECO:0007669"/>
    <property type="project" value="UniProtKB-UniRule"/>
</dbReference>
<dbReference type="GO" id="GO:0008270">
    <property type="term" value="F:zinc ion binding"/>
    <property type="evidence" value="ECO:0007669"/>
    <property type="project" value="UniProtKB-UniRule"/>
</dbReference>
<dbReference type="GO" id="GO:0019877">
    <property type="term" value="P:diaminopimelate biosynthetic process"/>
    <property type="evidence" value="ECO:0007669"/>
    <property type="project" value="UniProtKB-UniRule"/>
</dbReference>
<dbReference type="GO" id="GO:0006526">
    <property type="term" value="P:L-arginine biosynthetic process"/>
    <property type="evidence" value="ECO:0007669"/>
    <property type="project" value="TreeGrafter"/>
</dbReference>
<dbReference type="GO" id="GO:0009089">
    <property type="term" value="P:lysine biosynthetic process via diaminopimelate"/>
    <property type="evidence" value="ECO:0007669"/>
    <property type="project" value="UniProtKB-UniRule"/>
</dbReference>
<dbReference type="CDD" id="cd03891">
    <property type="entry name" value="M20_DapE_proteobac"/>
    <property type="match status" value="1"/>
</dbReference>
<dbReference type="FunFam" id="3.30.70.360:FF:000011">
    <property type="entry name" value="Succinyl-diaminopimelate desuccinylase"/>
    <property type="match status" value="1"/>
</dbReference>
<dbReference type="FunFam" id="3.40.630.10:FF:000005">
    <property type="entry name" value="Succinyl-diaminopimelate desuccinylase"/>
    <property type="match status" value="1"/>
</dbReference>
<dbReference type="Gene3D" id="3.40.630.10">
    <property type="entry name" value="Zn peptidases"/>
    <property type="match status" value="2"/>
</dbReference>
<dbReference type="HAMAP" id="MF_01690">
    <property type="entry name" value="DapE"/>
    <property type="match status" value="1"/>
</dbReference>
<dbReference type="InterPro" id="IPR001261">
    <property type="entry name" value="ArgE/DapE_CS"/>
</dbReference>
<dbReference type="InterPro" id="IPR036264">
    <property type="entry name" value="Bact_exopeptidase_dim_dom"/>
</dbReference>
<dbReference type="InterPro" id="IPR005941">
    <property type="entry name" value="DapE_proteobac"/>
</dbReference>
<dbReference type="InterPro" id="IPR002933">
    <property type="entry name" value="Peptidase_M20"/>
</dbReference>
<dbReference type="InterPro" id="IPR011650">
    <property type="entry name" value="Peptidase_M20_dimer"/>
</dbReference>
<dbReference type="InterPro" id="IPR050072">
    <property type="entry name" value="Peptidase_M20A"/>
</dbReference>
<dbReference type="NCBIfam" id="TIGR01246">
    <property type="entry name" value="dapE_proteo"/>
    <property type="match status" value="1"/>
</dbReference>
<dbReference type="NCBIfam" id="NF009557">
    <property type="entry name" value="PRK13009.1"/>
    <property type="match status" value="1"/>
</dbReference>
<dbReference type="PANTHER" id="PTHR43808">
    <property type="entry name" value="ACETYLORNITHINE DEACETYLASE"/>
    <property type="match status" value="1"/>
</dbReference>
<dbReference type="PANTHER" id="PTHR43808:SF31">
    <property type="entry name" value="N-ACETYL-L-CITRULLINE DEACETYLASE"/>
    <property type="match status" value="1"/>
</dbReference>
<dbReference type="Pfam" id="PF07687">
    <property type="entry name" value="M20_dimer"/>
    <property type="match status" value="1"/>
</dbReference>
<dbReference type="Pfam" id="PF01546">
    <property type="entry name" value="Peptidase_M20"/>
    <property type="match status" value="1"/>
</dbReference>
<dbReference type="SUPFAM" id="SSF55031">
    <property type="entry name" value="Bacterial exopeptidase dimerisation domain"/>
    <property type="match status" value="1"/>
</dbReference>
<dbReference type="SUPFAM" id="SSF53187">
    <property type="entry name" value="Zn-dependent exopeptidases"/>
    <property type="match status" value="1"/>
</dbReference>
<dbReference type="PROSITE" id="PS00758">
    <property type="entry name" value="ARGE_DAPE_CPG2_1"/>
    <property type="match status" value="1"/>
</dbReference>
<name>DAPE_CUPPJ</name>
<feature type="chain" id="PRO_0000375675" description="Succinyl-diaminopimelate desuccinylase">
    <location>
        <begin position="1"/>
        <end position="383"/>
    </location>
</feature>
<feature type="active site" evidence="1">
    <location>
        <position position="76"/>
    </location>
</feature>
<feature type="active site" description="Proton acceptor" evidence="1">
    <location>
        <position position="141"/>
    </location>
</feature>
<feature type="binding site" evidence="1">
    <location>
        <position position="74"/>
    </location>
    <ligand>
        <name>Zn(2+)</name>
        <dbReference type="ChEBI" id="CHEBI:29105"/>
        <label>1</label>
    </ligand>
</feature>
<feature type="binding site" evidence="1">
    <location>
        <position position="107"/>
    </location>
    <ligand>
        <name>Zn(2+)</name>
        <dbReference type="ChEBI" id="CHEBI:29105"/>
        <label>1</label>
    </ligand>
</feature>
<feature type="binding site" evidence="1">
    <location>
        <position position="107"/>
    </location>
    <ligand>
        <name>Zn(2+)</name>
        <dbReference type="ChEBI" id="CHEBI:29105"/>
        <label>2</label>
    </ligand>
</feature>
<feature type="binding site" evidence="1">
    <location>
        <position position="142"/>
    </location>
    <ligand>
        <name>Zn(2+)</name>
        <dbReference type="ChEBI" id="CHEBI:29105"/>
        <label>2</label>
    </ligand>
</feature>
<feature type="binding site" evidence="1">
    <location>
        <position position="170"/>
    </location>
    <ligand>
        <name>Zn(2+)</name>
        <dbReference type="ChEBI" id="CHEBI:29105"/>
        <label>1</label>
    </ligand>
</feature>
<feature type="binding site" evidence="1">
    <location>
        <position position="356"/>
    </location>
    <ligand>
        <name>Zn(2+)</name>
        <dbReference type="ChEBI" id="CHEBI:29105"/>
        <label>2</label>
    </ligand>
</feature>
<gene>
    <name evidence="1" type="primary">dapE</name>
    <name type="ordered locus">Reut_A1895</name>
</gene>
<protein>
    <recommendedName>
        <fullName evidence="1">Succinyl-diaminopimelate desuccinylase</fullName>
        <shortName evidence="1">SDAP desuccinylase</shortName>
        <ecNumber evidence="1">3.5.1.18</ecNumber>
    </recommendedName>
    <alternativeName>
        <fullName evidence="1">N-succinyl-LL-2,6-diaminoheptanedioate amidohydrolase</fullName>
    </alternativeName>
</protein>
<keyword id="KW-0028">Amino-acid biosynthesis</keyword>
<keyword id="KW-0170">Cobalt</keyword>
<keyword id="KW-0220">Diaminopimelate biosynthesis</keyword>
<keyword id="KW-0378">Hydrolase</keyword>
<keyword id="KW-0457">Lysine biosynthesis</keyword>
<keyword id="KW-0479">Metal-binding</keyword>
<keyword id="KW-0862">Zinc</keyword>
<sequence length="383" mass="41313">MTATLALTEDLIRRRSVTPADEGCQAVLETRLKALGFTCEAIVSGPDDFRVTNLWAVKRGTQGTDGKLLAFAGHTDVVPTGPLEQWNSDPFEPTHRDGRLYGRGAADMKTSIAGFVVAVEEFVKAHPAHAGSIAFLITSDEEGPAHDGTIKVVEALKARGERLDYCVIGEPTSVDTLGDMVKNGRRGSLSGKLVVKGVQCHIAYPHLGRNPIHEAAPALAELAAEVWDQGNEYFPPTSWQMSNIHGGTGATNVIPGHVTIDFNFRFSTASTPEGLKSRVHAILDKHKLEYTLDWTLGGEPFLTPRGDLSDALSAAIEAETGVKTELSTTGGTSDGRFIAKICPQVIEFGPPNATIHKIDENVEVRFIDPLKNVYRGVLERLIA</sequence>
<proteinExistence type="inferred from homology"/>